<feature type="peptide" id="PRO_0000044962" description="Delta-amaurobitoxin-Pl1b">
    <location>
        <begin position="1"/>
        <end position="37"/>
    </location>
</feature>
<feature type="site" description="Pharmacophore">
    <location>
        <position position="8"/>
    </location>
</feature>
<feature type="site" description="Pharmacophore">
    <location>
        <position position="12"/>
    </location>
</feature>
<feature type="site" description="May be involved in voltage sensor trapping upon activation of sodium channel" evidence="3">
    <location>
        <position position="19"/>
    </location>
</feature>
<feature type="site" description="Pharmacophore">
    <location>
        <position position="22"/>
    </location>
</feature>
<feature type="site" description="Pharmacophore">
    <location>
        <position position="24"/>
    </location>
</feature>
<feature type="site" description="Pharmacophore">
    <location>
        <position position="26"/>
    </location>
</feature>
<feature type="site" description="Pharmacophore">
    <location>
        <position position="28"/>
    </location>
</feature>
<feature type="site" description="Pharmacophore">
    <location>
        <position position="30"/>
    </location>
</feature>
<feature type="site" description="Pharmacophore">
    <location>
        <position position="32"/>
    </location>
</feature>
<feature type="site" description="Pharmacophore">
    <location>
        <position position="34"/>
    </location>
</feature>
<feature type="modified residue" description="Serine amide" evidence="1">
    <location>
        <position position="37"/>
    </location>
</feature>
<feature type="disulfide bond" evidence="3 7">
    <location>
        <begin position="2"/>
        <end position="18"/>
    </location>
</feature>
<feature type="disulfide bond" evidence="3 7">
    <location>
        <begin position="9"/>
        <end position="23"/>
    </location>
</feature>
<feature type="disulfide bond" evidence="3 7">
    <location>
        <begin position="17"/>
        <end position="33"/>
    </location>
</feature>
<feature type="disulfide bond" evidence="3 7">
    <location>
        <begin position="25"/>
        <end position="31"/>
    </location>
</feature>
<feature type="mutagenesis site" description="No change in binding affinity and in lethal dose." evidence="2">
    <original>V</original>
    <variation>A</variation>
    <location>
        <position position="3"/>
    </location>
</feature>
<feature type="mutagenesis site" description="No change in binding affinity and in lethal dose." evidence="2">
    <original>D</original>
    <variation>A</variation>
    <location>
        <position position="5"/>
    </location>
</feature>
<feature type="mutagenesis site" description="No change in binding affinity and in lethal dose." evidence="2">
    <original>Q</original>
    <variation>A</variation>
    <location>
        <position position="7"/>
    </location>
</feature>
<feature type="mutagenesis site" description="51-fold decrease in binding affinity and no change in lethal dose." evidence="2">
    <original>R</original>
    <variation>A</variation>
    <location>
        <position position="8"/>
    </location>
</feature>
<feature type="mutagenesis site" description="More than 80-fold decrease in binding affinity and 5-fold decrease in toxicity." evidence="2">
    <original>R</original>
    <variation>D</variation>
    <location>
        <position position="8"/>
    </location>
</feature>
<feature type="mutagenesis site" description="No change in binding affinity and in lethal dose." evidence="2">
    <original>S</original>
    <variation>A</variation>
    <location>
        <position position="11"/>
    </location>
</feature>
<feature type="mutagenesis site" description="More than 160-fold decrease in binding affinity and no change in lethal dose." evidence="2">
    <original>W</original>
    <variation>A</variation>
    <location>
        <position position="12"/>
    </location>
</feature>
<feature type="mutagenesis site" description="13.5-fold decrease in binding affinity and more than 8-fold decrease in toxicity." evidence="2">
    <original>W</original>
    <variation>F</variation>
    <location>
        <position position="12"/>
    </location>
</feature>
<feature type="mutagenesis site" description="No change in binding affinity and in lethal dose." evidence="2">
    <original>S</original>
    <variation>A</variation>
    <location>
        <position position="13"/>
    </location>
</feature>
<feature type="mutagenesis site" description="No change in binding affinity and in lethal dose." evidence="2">
    <original>Y</original>
    <variation>A</variation>
    <location>
        <position position="16"/>
    </location>
</feature>
<feature type="mutagenesis site" description="No change in binding affinity and 2.9-fold decrease in toxicity." evidence="2">
    <original>D</original>
    <variation>A</variation>
    <location>
        <position position="19"/>
    </location>
</feature>
<feature type="mutagenesis site" description="No change in binding affinity and in lethal dose." evidence="2">
    <original>Y</original>
    <variation>A</variation>
    <location>
        <position position="21"/>
    </location>
</feature>
<feature type="mutagenesis site" description="54-fold decrease in binding affinity and no change in lethal dose." evidence="2">
    <original>Y</original>
    <variation>A</variation>
    <location>
        <position position="22"/>
    </location>
</feature>
<feature type="mutagenesis site" description="40-fold decrease in binding affinity and no change in lethal dose." evidence="2">
    <original>S</original>
    <variation>A</variation>
    <location>
        <position position="24"/>
    </location>
</feature>
<feature type="mutagenesis site" description="16-fold decrease in binding affinity and no change in lethal dose." evidence="2">
    <original>R</original>
    <variation>A</variation>
    <location>
        <position position="26"/>
    </location>
</feature>
<feature type="mutagenesis site" description="28-fold decrease in binding affinity and no change in lethal dose." evidence="2">
    <original>M</original>
    <variation>A</variation>
    <location>
        <position position="28"/>
    </location>
</feature>
<feature type="mutagenesis site" description="58-fold decrease in binding affinity and 5.1-fold decrease in toxicity." evidence="2">
    <original>Y</original>
    <variation>A</variation>
    <location>
        <position position="30"/>
    </location>
</feature>
<feature type="mutagenesis site" description="16-fold decrease in binding affinity and no change in lethal dose." evidence="2">
    <original>Y</original>
    <variation>F</variation>
    <location>
        <position position="30"/>
    </location>
</feature>
<feature type="mutagenesis site" description="24-fold decrease in binding affinity and 2.3-fold decrease in toxicity." evidence="2">
    <original>R</original>
    <variation>A</variation>
    <location>
        <position position="32"/>
    </location>
</feature>
<feature type="mutagenesis site" description="18-fold decrease in binding affinity and no change in lethal dose." evidence="2">
    <original>R</original>
    <variation>A</variation>
    <location>
        <position position="34"/>
    </location>
</feature>
<feature type="mutagenesis site" description="No change in binding affinity and in lethal dose." evidence="2">
    <original>N</original>
    <variation>A</variation>
    <location>
        <position position="35"/>
    </location>
</feature>
<feature type="mutagenesis site" description="No change in binding affinity and in lethal dose." evidence="2">
    <original>N</original>
    <variation>A</variation>
    <location>
        <position position="36"/>
    </location>
</feature>
<feature type="mutagenesis site" description="No change in binding affinity and in lethal dose." evidence="2">
    <original>S</original>
    <variation>A</variation>
    <location>
        <position position="37"/>
    </location>
</feature>
<feature type="strand" evidence="8">
    <location>
        <begin position="5"/>
        <end position="8"/>
    </location>
</feature>
<feature type="turn" evidence="8">
    <location>
        <begin position="11"/>
        <end position="13"/>
    </location>
</feature>
<feature type="strand" evidence="8">
    <location>
        <begin position="22"/>
        <end position="24"/>
    </location>
</feature>
<feature type="strand" evidence="8">
    <location>
        <begin position="27"/>
        <end position="30"/>
    </location>
</feature>
<feature type="strand" evidence="8">
    <location>
        <begin position="32"/>
        <end position="34"/>
    </location>
</feature>
<evidence type="ECO:0000269" key="1">
    <source>
    </source>
</evidence>
<evidence type="ECO:0000269" key="2">
    <source>
    </source>
</evidence>
<evidence type="ECO:0000269" key="3">
    <source>
    </source>
</evidence>
<evidence type="ECO:0000303" key="4">
    <source>
    </source>
</evidence>
<evidence type="ECO:0000305" key="5"/>
<evidence type="ECO:0000305" key="6">
    <source>
    </source>
</evidence>
<evidence type="ECO:0007744" key="7">
    <source>
        <dbReference type="PDB" id="1V91"/>
    </source>
</evidence>
<evidence type="ECO:0007829" key="8">
    <source>
        <dbReference type="PDB" id="1V91"/>
    </source>
</evidence>
<keyword id="KW-0002">3D-structure</keyword>
<keyword id="KW-0027">Amidation</keyword>
<keyword id="KW-0903">Direct protein sequencing</keyword>
<keyword id="KW-1015">Disulfide bond</keyword>
<keyword id="KW-0872">Ion channel impairing toxin</keyword>
<keyword id="KW-0960">Knottin</keyword>
<keyword id="KW-0528">Neurotoxin</keyword>
<keyword id="KW-0964">Secreted</keyword>
<keyword id="KW-0800">Toxin</keyword>
<keyword id="KW-0738">Voltage-gated sodium channel impairing toxin</keyword>
<sequence>ACVGDGQRCASWSGPYCCDGYYCSCRSMPYCRCRNNS</sequence>
<dbReference type="PDB" id="1V91">
    <property type="method" value="NMR"/>
    <property type="chains" value="A=1-37"/>
</dbReference>
<dbReference type="PDBsum" id="1V91"/>
<dbReference type="SMR" id="P83257"/>
<dbReference type="TCDB" id="8.B.6.1.9">
    <property type="family name" value="the ca(2+) channel-targeting spider toxin (cst) family"/>
</dbReference>
<dbReference type="ArachnoServer" id="AS000302">
    <property type="toxin name" value="delta-Amaurobitoxin-Pl1b"/>
</dbReference>
<dbReference type="EvolutionaryTrace" id="P83257"/>
<dbReference type="GO" id="GO:0005576">
    <property type="term" value="C:extracellular region"/>
    <property type="evidence" value="ECO:0007669"/>
    <property type="project" value="UniProtKB-SubCell"/>
</dbReference>
<dbReference type="GO" id="GO:0019871">
    <property type="term" value="F:sodium channel inhibitor activity"/>
    <property type="evidence" value="ECO:0000314"/>
    <property type="project" value="GO_Central"/>
</dbReference>
<dbReference type="GO" id="GO:0090729">
    <property type="term" value="F:toxin activity"/>
    <property type="evidence" value="ECO:0000314"/>
    <property type="project" value="UniProtKB"/>
</dbReference>
<dbReference type="GO" id="GO:0044493">
    <property type="term" value="P:envenomation resulting in negative regulation of voltage-gated sodium channel activity in another organism"/>
    <property type="evidence" value="ECO:0000314"/>
    <property type="project" value="UniProtKB"/>
</dbReference>
<dbReference type="InterPro" id="IPR016328">
    <property type="entry name" value="Beta/delta-agatoxin_fam"/>
</dbReference>
<dbReference type="Pfam" id="PF05980">
    <property type="entry name" value="Toxin_7"/>
    <property type="match status" value="1"/>
</dbReference>
<dbReference type="PIRSF" id="PIRSF001882">
    <property type="entry name" value="Curtatoxin"/>
    <property type="match status" value="1"/>
</dbReference>
<dbReference type="SUPFAM" id="SSF57059">
    <property type="entry name" value="omega toxin-like"/>
    <property type="match status" value="1"/>
</dbReference>
<dbReference type="PROSITE" id="PS60015">
    <property type="entry name" value="MU_AGATOXIN"/>
    <property type="match status" value="1"/>
</dbReference>
<proteinExistence type="evidence at protein level"/>
<accession>P83257</accession>
<protein>
    <recommendedName>
        <fullName>Delta-amaurobitoxin-Pl1b</fullName>
        <shortName>Delta-AMATX-Pl1b</shortName>
    </recommendedName>
    <alternativeName>
        <fullName evidence="4">Delta-palutoxin IT2</fullName>
        <shortName evidence="4">Delta-paluIT2</shortName>
    </alternativeName>
</protein>
<comment type="function">
    <text evidence="1 2">Insecticidal toxin. Binds to site 4 of insect voltage-gated sodium channel (Nav) and inhibits channel inactivation. In vivo, it lethal to lepidopteran larvae. Has no adverse affects when intracerebroventricularly injected in mice at a dose of 0.2 ug, but causes reversible paralysis of legs when injected intracerebroventricularly in mice at a dose of 2.0 ug.</text>
</comment>
<comment type="subcellular location">
    <subcellularLocation>
        <location evidence="1">Secreted</location>
    </subcellularLocation>
</comment>
<comment type="tissue specificity">
    <text evidence="6">Expressed by the venom gland.</text>
</comment>
<comment type="domain">
    <text evidence="5">The presence of a 'disulfide through disulfide knot' structurally defines this protein as a knottin.</text>
</comment>
<comment type="mass spectrometry"/>
<comment type="toxic dose">
    <text evidence="2">LD(50) is 24.2 ng/mg body weight of lepidoptera larvae.</text>
</comment>
<comment type="similarity">
    <text evidence="5">Belongs to the neurotoxin 07 (Beta/delta-agtx) family. 02 (aga-3) subfamily.</text>
</comment>
<name>T3D1B_PIRLC</name>
<organism>
    <name type="scientific">Pireneitega luctuosa</name>
    <name type="common">Tangled nest spider</name>
    <name type="synonym">Paracoelotes luctuosus</name>
    <dbReference type="NCBI Taxonomy" id="185217"/>
    <lineage>
        <taxon>Eukaryota</taxon>
        <taxon>Metazoa</taxon>
        <taxon>Ecdysozoa</taxon>
        <taxon>Arthropoda</taxon>
        <taxon>Chelicerata</taxon>
        <taxon>Arachnida</taxon>
        <taxon>Araneae</taxon>
        <taxon>Araneomorphae</taxon>
        <taxon>Entelegynae</taxon>
        <taxon>Agelenidae</taxon>
        <taxon>Pireneitega</taxon>
    </lineage>
</organism>
<reference key="1">
    <citation type="journal article" date="2000" name="Eur. J. Biochem.">
        <title>Isolation, synthesis and pharmacological characterization of delta-palutoxins IT, novel insecticidal toxins from the spider Paracoelotes luctuosus (Amaurobiidae).</title>
        <authorList>
            <person name="Corzo G."/>
            <person name="Escoubas P."/>
            <person name="Stankiewicz M."/>
            <person name="Pelhate M."/>
            <person name="Kristensen C.P."/>
            <person name="Nakajima T."/>
        </authorList>
    </citation>
    <scope>PROTEIN SEQUENCE</scope>
    <scope>FUNCTION</scope>
    <scope>AMIDATION AT SER-37</scope>
    <scope>MASS SPECTROMETRY</scope>
    <scope>SUBCELLULAR LOCATION</scope>
    <source>
        <tissue>Venom</tissue>
    </source>
</reference>
<reference key="2">
    <citation type="journal article" date="2005" name="Biochemistry">
        <title>A spider toxin that induces a typical effect of scorpion alpha-toxins but competes with beta-toxins on binding to insect sodium channels.</title>
        <authorList>
            <person name="Corzo G."/>
            <person name="Escoubas P."/>
            <person name="Villegas E."/>
            <person name="Karbat I."/>
            <person name="Gordon D."/>
            <person name="Gurevitz M."/>
            <person name="Nakajima T."/>
            <person name="Gilles N."/>
        </authorList>
    </citation>
    <scope>FUNCTION</scope>
    <scope>TOXIC DOSE</scope>
    <scope>SYNTHESIS</scope>
    <scope>MUTAGENESIS OF VAL-3; ASP-5; GLN-7; ARG-8; ARG-8; SER-11; TRP-12; TRP-12; SER-13; TYR-16; ASP-19; TYR-21; TYR-22; SER-24; ARG-26; MET-28; TYR-30; ARG-32; ARG-34; ASN-35; ASN-36 AND SER-37</scope>
    <scope>SITE</scope>
</reference>
<reference key="3">
    <citation type="journal article" date="2005" name="Proteins">
        <title>Solution structure of two insect-specific spider toxins and their pharmacological interaction with the insect voltage-gated Na+ channel.</title>
        <authorList>
            <person name="Ferrat G."/>
            <person name="Bosmans F."/>
            <person name="Tytgat J."/>
            <person name="Pimentel C."/>
            <person name="Chagot B."/>
            <person name="Gilles N."/>
            <person name="Nakajima T."/>
            <person name="Darbon H."/>
            <person name="Corzo G."/>
        </authorList>
    </citation>
    <scope>STRUCTURE BY NMR</scope>
    <scope>DISULFIDE BONDS</scope>
</reference>